<sequence length="347" mass="38864">MNLACKLLASFLLIFFFSSKGAVSKKNITILGALERDINLDIPAFQMSEHVEDIQWSKGKTKIAKFKNGSMTFQKDKTYEVLKNGTLKIKHLERIHEGTYKVDAYDSDGKNVLEETFHLSLLEMVSKPNISWSCTNTTLTCEVTKGTDFELKLYLNGRMIQKSPRKVIVYKRASNQIASFKCTANNTVSEESSSVVIRCTEKGLDIYLISGICGGGIILFVFLALLIFYISKRKKQNSRRNDEELEIRAHKVISEERGRKPHQIPGSTPLNPAASQPPPPPSHRPQAPGHRPQVPGHRPLPPGHRVQHQQQKRPAPTPGTQAHQQKGPPLPRPRVQPKPPRGATENS</sequence>
<dbReference type="EMBL" id="X69884">
    <property type="protein sequence ID" value="CAA49511.1"/>
    <property type="molecule type" value="mRNA"/>
</dbReference>
<dbReference type="PIR" id="S41638">
    <property type="entry name" value="S41638"/>
</dbReference>
<dbReference type="RefSeq" id="NP_001078903.1">
    <property type="nucleotide sequence ID" value="NM_001085434.2"/>
</dbReference>
<dbReference type="SMR" id="P37998"/>
<dbReference type="ELM" id="P37998"/>
<dbReference type="FunCoup" id="P37998">
    <property type="interactions" value="512"/>
</dbReference>
<dbReference type="IntAct" id="P37998">
    <property type="interactions" value="1"/>
</dbReference>
<dbReference type="MINT" id="P37998"/>
<dbReference type="STRING" id="9796.ENSECAP00000017053"/>
<dbReference type="GlyCosmos" id="P37998">
    <property type="glycosylation" value="6 sites, No reported glycans"/>
</dbReference>
<dbReference type="PaxDb" id="9796-ENSECAP00000017053"/>
<dbReference type="GeneID" id="100034205"/>
<dbReference type="KEGG" id="ecb:100034205"/>
<dbReference type="CTD" id="914"/>
<dbReference type="HOGENOM" id="CLU_069390_0_0_1"/>
<dbReference type="InParanoid" id="P37998"/>
<dbReference type="OMA" id="DIPNFQM"/>
<dbReference type="OrthoDB" id="8439544at2759"/>
<dbReference type="TreeFam" id="TF335971"/>
<dbReference type="Proteomes" id="UP000002281">
    <property type="component" value="Chromosome 5"/>
</dbReference>
<dbReference type="Bgee" id="ENSECAG00000019437">
    <property type="expression patterns" value="Expressed in leukocyte and 18 other cell types or tissues"/>
</dbReference>
<dbReference type="GO" id="GO:0009986">
    <property type="term" value="C:cell surface"/>
    <property type="evidence" value="ECO:0007669"/>
    <property type="project" value="UniProtKB-ARBA"/>
</dbReference>
<dbReference type="GO" id="GO:0005886">
    <property type="term" value="C:plasma membrane"/>
    <property type="evidence" value="ECO:0007669"/>
    <property type="project" value="UniProtKB-SubCell"/>
</dbReference>
<dbReference type="GO" id="GO:0005102">
    <property type="term" value="F:signaling receptor binding"/>
    <property type="evidence" value="ECO:0000318"/>
    <property type="project" value="GO_Central"/>
</dbReference>
<dbReference type="GO" id="GO:0098609">
    <property type="term" value="P:cell-cell adhesion"/>
    <property type="evidence" value="ECO:0000318"/>
    <property type="project" value="GO_Central"/>
</dbReference>
<dbReference type="GO" id="GO:0006955">
    <property type="term" value="P:immune response"/>
    <property type="evidence" value="ECO:0000318"/>
    <property type="project" value="GO_Central"/>
</dbReference>
<dbReference type="GO" id="GO:0030101">
    <property type="term" value="P:natural killer cell activation"/>
    <property type="evidence" value="ECO:0000318"/>
    <property type="project" value="GO_Central"/>
</dbReference>
<dbReference type="Gene3D" id="2.60.40.10">
    <property type="entry name" value="Immunoglobulins"/>
    <property type="match status" value="2"/>
</dbReference>
<dbReference type="InterPro" id="IPR015632">
    <property type="entry name" value="CD2"/>
</dbReference>
<dbReference type="InterPro" id="IPR015631">
    <property type="entry name" value="CD2/SLAM_rcpt"/>
</dbReference>
<dbReference type="InterPro" id="IPR036179">
    <property type="entry name" value="Ig-like_dom_sf"/>
</dbReference>
<dbReference type="InterPro" id="IPR013783">
    <property type="entry name" value="Ig-like_fold"/>
</dbReference>
<dbReference type="InterPro" id="IPR008424">
    <property type="entry name" value="Ig_C2-set"/>
</dbReference>
<dbReference type="InterPro" id="IPR013106">
    <property type="entry name" value="Ig_V-set"/>
</dbReference>
<dbReference type="PANTHER" id="PTHR12080">
    <property type="entry name" value="SIGNALING LYMPHOCYTIC ACTIVATION MOLECULE"/>
    <property type="match status" value="1"/>
</dbReference>
<dbReference type="PANTHER" id="PTHR12080:SF54">
    <property type="entry name" value="T-CELL SURFACE ANTIGEN CD2"/>
    <property type="match status" value="1"/>
</dbReference>
<dbReference type="Pfam" id="PF05790">
    <property type="entry name" value="C2-set"/>
    <property type="match status" value="1"/>
</dbReference>
<dbReference type="Pfam" id="PF07686">
    <property type="entry name" value="V-set"/>
    <property type="match status" value="1"/>
</dbReference>
<dbReference type="PRINTS" id="PR01870">
    <property type="entry name" value="CD2ANTIGEN"/>
</dbReference>
<dbReference type="SUPFAM" id="SSF48726">
    <property type="entry name" value="Immunoglobulin"/>
    <property type="match status" value="2"/>
</dbReference>
<accession>P37998</accession>
<protein>
    <recommendedName>
        <fullName>T-cell surface antigen CD2</fullName>
    </recommendedName>
    <cdAntigenName>CD2</cdAntigenName>
</protein>
<gene>
    <name type="primary">CD2</name>
</gene>
<organism>
    <name type="scientific">Equus caballus</name>
    <name type="common">Horse</name>
    <dbReference type="NCBI Taxonomy" id="9796"/>
    <lineage>
        <taxon>Eukaryota</taxon>
        <taxon>Metazoa</taxon>
        <taxon>Chordata</taxon>
        <taxon>Craniata</taxon>
        <taxon>Vertebrata</taxon>
        <taxon>Euteleostomi</taxon>
        <taxon>Mammalia</taxon>
        <taxon>Eutheria</taxon>
        <taxon>Laurasiatheria</taxon>
        <taxon>Perissodactyla</taxon>
        <taxon>Equidae</taxon>
        <taxon>Equus</taxon>
    </lineage>
</organism>
<proteinExistence type="evidence at transcript level"/>
<name>CD2_HORSE</name>
<reference key="1">
    <citation type="journal article" date="1994" name="Eur. J. Biochem.">
        <title>Expression cloning of an equine T-lymphocyte glycoprotein CD2 cDNA. Structure-based analysis of conserved sequence elements.</title>
        <authorList>
            <person name="Tavernor A.S."/>
            <person name="Kydd J.H."/>
            <person name="Bodian D.L."/>
            <person name="Jones E.Y."/>
            <person name="Stuart D.I."/>
            <person name="Davis S.J."/>
            <person name="Butcher G.W."/>
        </authorList>
    </citation>
    <scope>NUCLEOTIDE SEQUENCE [MRNA]</scope>
    <scope>SUBCELLULAR LOCATION</scope>
    <scope>TISSUE SPECIFICITY</scope>
    <scope>3D-STRUCTURE MODELING</scope>
    <source>
        <tissue>T-cell</tissue>
    </source>
</reference>
<evidence type="ECO:0000250" key="1"/>
<evidence type="ECO:0000250" key="2">
    <source>
        <dbReference type="UniProtKB" id="P06729"/>
    </source>
</evidence>
<evidence type="ECO:0000250" key="3">
    <source>
        <dbReference type="UniProtKB" id="P08920"/>
    </source>
</evidence>
<evidence type="ECO:0000250" key="4">
    <source>
        <dbReference type="UniProtKB" id="P08921"/>
    </source>
</evidence>
<evidence type="ECO:0000255" key="5"/>
<evidence type="ECO:0000256" key="6">
    <source>
        <dbReference type="SAM" id="MobiDB-lite"/>
    </source>
</evidence>
<evidence type="ECO:0000269" key="7">
    <source>
    </source>
</evidence>
<evidence type="ECO:0000305" key="8"/>
<keyword id="KW-0130">Cell adhesion</keyword>
<keyword id="KW-1003">Cell membrane</keyword>
<keyword id="KW-1015">Disulfide bond</keyword>
<keyword id="KW-0325">Glycoprotein</keyword>
<keyword id="KW-0393">Immunoglobulin domain</keyword>
<keyword id="KW-0472">Membrane</keyword>
<keyword id="KW-1185">Reference proteome</keyword>
<keyword id="KW-0677">Repeat</keyword>
<keyword id="KW-0732">Signal</keyword>
<keyword id="KW-0812">Transmembrane</keyword>
<keyword id="KW-1133">Transmembrane helix</keyword>
<comment type="function">
    <text>CD2 interacts with lymphocyte function-associated antigen CD58 (LFA-3) to mediate adhesion between T-cells and other cell types. CD2 is implicated in the triggering of T-cells, the cytoplasmic domain is implicated in the signaling function.</text>
</comment>
<comment type="subunit">
    <text evidence="2 3 4">Interacts with CD48 (By similarity). Interacts with CD58 (LFA-3) (By similarity). Interacts with CD2AP (By similarity). Interacts with PSTPIP1 (By similarity). Interacts with FCGR3A; this interaction modulates NK cell activation and cytotoxicity.</text>
</comment>
<comment type="subcellular location">
    <subcellularLocation>
        <location evidence="7">Cell membrane</location>
        <topology evidence="8">Single-pass type I membrane protein</topology>
    </subcellularLocation>
</comment>
<comment type="tissue specificity">
    <text evidence="7">Expressed in spleen and thymus.</text>
</comment>
<feature type="signal peptide" evidence="1">
    <location>
        <begin position="1"/>
        <end position="24"/>
    </location>
</feature>
<feature type="chain" id="PRO_0000014599" description="T-cell surface antigen CD2">
    <location>
        <begin position="25"/>
        <end position="347"/>
    </location>
</feature>
<feature type="topological domain" description="Extracellular" evidence="5">
    <location>
        <begin position="25"/>
        <end position="205"/>
    </location>
</feature>
<feature type="transmembrane region" description="Helical" evidence="5">
    <location>
        <begin position="206"/>
        <end position="230"/>
    </location>
</feature>
<feature type="topological domain" description="Cytoplasmic" evidence="5">
    <location>
        <begin position="231"/>
        <end position="347"/>
    </location>
</feature>
<feature type="domain" description="Ig-like V-type">
    <location>
        <begin position="25"/>
        <end position="123"/>
    </location>
</feature>
<feature type="domain" description="Ig-like C2-type">
    <location>
        <begin position="124"/>
        <end position="199"/>
    </location>
</feature>
<feature type="repeat" description="1">
    <location>
        <begin position="283"/>
        <end position="289"/>
    </location>
</feature>
<feature type="repeat" description="2">
    <location>
        <begin position="290"/>
        <end position="296"/>
    </location>
</feature>
<feature type="repeat" description="3">
    <location>
        <begin position="297"/>
        <end position="303"/>
    </location>
</feature>
<feature type="region of interest" description="CD58 binding region 1" evidence="2">
    <location>
        <begin position="58"/>
        <end position="70"/>
    </location>
</feature>
<feature type="region of interest" description="CD58 binding region 2" evidence="2">
    <location>
        <begin position="101"/>
        <end position="115"/>
    </location>
</feature>
<feature type="region of interest" description="Disordered" evidence="6">
    <location>
        <begin position="252"/>
        <end position="347"/>
    </location>
</feature>
<feature type="region of interest" description="3 X 7 AA tandem repeats of H-R-P-[QL]-[AVP]-P-G">
    <location>
        <begin position="283"/>
        <end position="303"/>
    </location>
</feature>
<feature type="compositionally biased region" description="Pro residues" evidence="6">
    <location>
        <begin position="328"/>
        <end position="340"/>
    </location>
</feature>
<feature type="glycosylation site" description="N-linked (GlcNAc...) asparagine" evidence="5">
    <location>
        <position position="27"/>
    </location>
</feature>
<feature type="glycosylation site" description="N-linked (GlcNAc...) asparagine" evidence="5">
    <location>
        <position position="68"/>
    </location>
</feature>
<feature type="glycosylation site" description="N-linked (GlcNAc...) asparagine" evidence="5">
    <location>
        <position position="84"/>
    </location>
</feature>
<feature type="glycosylation site" description="N-linked (GlcNAc...) asparagine" evidence="5">
    <location>
        <position position="129"/>
    </location>
</feature>
<feature type="glycosylation site" description="N-linked (GlcNAc...) asparagine" evidence="5">
    <location>
        <position position="136"/>
    </location>
</feature>
<feature type="glycosylation site" description="N-linked (GlcNAc...) asparagine" evidence="5">
    <location>
        <position position="185"/>
    </location>
</feature>
<feature type="disulfide bond" evidence="4">
    <location>
        <begin position="134"/>
        <end position="199"/>
    </location>
</feature>
<feature type="disulfide bond" evidence="4">
    <location>
        <begin position="141"/>
        <end position="182"/>
    </location>
</feature>